<comment type="similarity">
    <text evidence="1">Belongs to the thioesterase PaaI family.</text>
</comment>
<gene>
    <name type="ordered locus">SSO1253</name>
</gene>
<dbReference type="EC" id="3.1.2.-"/>
<dbReference type="EMBL" id="AE006641">
    <property type="protein sequence ID" value="AAK41492.1"/>
    <property type="molecule type" value="Genomic_DNA"/>
</dbReference>
<dbReference type="PIR" id="E90279">
    <property type="entry name" value="E90279"/>
</dbReference>
<dbReference type="SMR" id="Q97YR6"/>
<dbReference type="FunCoup" id="Q97YR6">
    <property type="interactions" value="63"/>
</dbReference>
<dbReference type="PaxDb" id="273057-SSO1253"/>
<dbReference type="EnsemblBacteria" id="AAK41492">
    <property type="protein sequence ID" value="AAK41492"/>
    <property type="gene ID" value="SSO1253"/>
</dbReference>
<dbReference type="KEGG" id="sso:SSO1253"/>
<dbReference type="PATRIC" id="fig|273057.12.peg.1248"/>
<dbReference type="eggNOG" id="arCOG00777">
    <property type="taxonomic scope" value="Archaea"/>
</dbReference>
<dbReference type="HOGENOM" id="CLU_089876_3_3_2"/>
<dbReference type="InParanoid" id="Q97YR6"/>
<dbReference type="PhylomeDB" id="Q97YR6"/>
<dbReference type="Proteomes" id="UP000001974">
    <property type="component" value="Chromosome"/>
</dbReference>
<dbReference type="GO" id="GO:0047617">
    <property type="term" value="F:fatty acyl-CoA hydrolase activity"/>
    <property type="evidence" value="ECO:0000318"/>
    <property type="project" value="GO_Central"/>
</dbReference>
<dbReference type="CDD" id="cd03443">
    <property type="entry name" value="PaaI_thioesterase"/>
    <property type="match status" value="1"/>
</dbReference>
<dbReference type="FunFam" id="3.10.129.10:FF:000113">
    <property type="entry name" value="Thioesterase superfamily protein"/>
    <property type="match status" value="1"/>
</dbReference>
<dbReference type="Gene3D" id="3.10.129.10">
    <property type="entry name" value="Hotdog Thioesterase"/>
    <property type="match status" value="1"/>
</dbReference>
<dbReference type="InterPro" id="IPR039298">
    <property type="entry name" value="ACOT13"/>
</dbReference>
<dbReference type="InterPro" id="IPR029069">
    <property type="entry name" value="HotDog_dom_sf"/>
</dbReference>
<dbReference type="InterPro" id="IPR003736">
    <property type="entry name" value="PAAI_dom"/>
</dbReference>
<dbReference type="InterPro" id="IPR006683">
    <property type="entry name" value="Thioestr_dom"/>
</dbReference>
<dbReference type="NCBIfam" id="TIGR00369">
    <property type="entry name" value="unchar_dom_1"/>
    <property type="match status" value="1"/>
</dbReference>
<dbReference type="PANTHER" id="PTHR21660:SF1">
    <property type="entry name" value="ACYL-COENZYME A THIOESTERASE 13"/>
    <property type="match status" value="1"/>
</dbReference>
<dbReference type="PANTHER" id="PTHR21660">
    <property type="entry name" value="THIOESTERASE SUPERFAMILY MEMBER-RELATED"/>
    <property type="match status" value="1"/>
</dbReference>
<dbReference type="Pfam" id="PF03061">
    <property type="entry name" value="4HBT"/>
    <property type="match status" value="1"/>
</dbReference>
<dbReference type="SUPFAM" id="SSF54637">
    <property type="entry name" value="Thioesterase/thiol ester dehydrase-isomerase"/>
    <property type="match status" value="1"/>
</dbReference>
<name>Y1253_SACS2</name>
<feature type="chain" id="PRO_0000156691" description="Putative esterase SSO1253">
    <location>
        <begin position="1"/>
        <end position="150"/>
    </location>
</feature>
<evidence type="ECO:0000305" key="1"/>
<reference key="1">
    <citation type="journal article" date="2001" name="Proc. Natl. Acad. Sci. U.S.A.">
        <title>The complete genome of the crenarchaeon Sulfolobus solfataricus P2.</title>
        <authorList>
            <person name="She Q."/>
            <person name="Singh R.K."/>
            <person name="Confalonieri F."/>
            <person name="Zivanovic Y."/>
            <person name="Allard G."/>
            <person name="Awayez M.J."/>
            <person name="Chan-Weiher C.C.-Y."/>
            <person name="Clausen I.G."/>
            <person name="Curtis B.A."/>
            <person name="De Moors A."/>
            <person name="Erauso G."/>
            <person name="Fletcher C."/>
            <person name="Gordon P.M.K."/>
            <person name="Heikamp-de Jong I."/>
            <person name="Jeffries A.C."/>
            <person name="Kozera C.J."/>
            <person name="Medina N."/>
            <person name="Peng X."/>
            <person name="Thi-Ngoc H.P."/>
            <person name="Redder P."/>
            <person name="Schenk M.E."/>
            <person name="Theriault C."/>
            <person name="Tolstrup N."/>
            <person name="Charlebois R.L."/>
            <person name="Doolittle W.F."/>
            <person name="Duguet M."/>
            <person name="Gaasterland T."/>
            <person name="Garrett R.A."/>
            <person name="Ragan M.A."/>
            <person name="Sensen C.W."/>
            <person name="Van der Oost J."/>
        </authorList>
    </citation>
    <scope>NUCLEOTIDE SEQUENCE [LARGE SCALE GENOMIC DNA]</scope>
    <source>
        <strain>ATCC 35092 / DSM 1617 / JCM 11322 / P2</strain>
    </source>
</reference>
<proteinExistence type="inferred from homology"/>
<keyword id="KW-0378">Hydrolase</keyword>
<keyword id="KW-1185">Reference proteome</keyword>
<accession>Q97YR6</accession>
<organism>
    <name type="scientific">Saccharolobus solfataricus (strain ATCC 35092 / DSM 1617 / JCM 11322 / P2)</name>
    <name type="common">Sulfolobus solfataricus</name>
    <dbReference type="NCBI Taxonomy" id="273057"/>
    <lineage>
        <taxon>Archaea</taxon>
        <taxon>Thermoproteota</taxon>
        <taxon>Thermoprotei</taxon>
        <taxon>Sulfolobales</taxon>
        <taxon>Sulfolobaceae</taxon>
        <taxon>Saccharolobus</taxon>
    </lineage>
</organism>
<sequence>MKNKNLFPMLSVSEVNELLKQEEIFNFIGIEFEKLEKGYSRLKFNFNEKLTRIGGILHGGVVFSAVDYAGSYAVRTLDKVKDGVTAELKINFLKPMKEGPFTVEPRVISEGKRLVVVDISAYDGNSNLCAKALGTWVVYRETNSETQLSS</sequence>
<protein>
    <recommendedName>
        <fullName>Putative esterase SSO1253</fullName>
        <ecNumber>3.1.2.-</ecNumber>
    </recommendedName>
</protein>